<comment type="function">
    <text evidence="2">Component of the ubiquinol-cytochrome c reductase complex (complex III or cytochrome b-c1 complex) that is part of the mitochondrial respiratory chain. The b-c1 complex mediates electron transfer from ubiquinol to cytochrome c. Contributes to the generation of a proton gradient across the mitochondrial membrane that is then used for ATP synthesis.</text>
</comment>
<comment type="cofactor">
    <cofactor evidence="2">
        <name>heme b</name>
        <dbReference type="ChEBI" id="CHEBI:60344"/>
    </cofactor>
    <text evidence="2">Binds 2 heme b groups non-covalently.</text>
</comment>
<comment type="subunit">
    <text evidence="2">The cytochrome bc1 complex contains 11 subunits: 3 respiratory subunits (MT-CYB, CYC1 and UQCRFS1), 2 core proteins (UQCRC1 and UQCRC2) and 6 low-molecular weight proteins (UQCRH/QCR6, UQCRB/QCR7, UQCRQ/QCR8, UQCR10/QCR9, UQCR11/QCR10 and a cleavage product of UQCRFS1). This cytochrome bc1 complex then forms a dimer.</text>
</comment>
<comment type="subcellular location">
    <subcellularLocation>
        <location evidence="2">Mitochondrion inner membrane</location>
        <topology evidence="2">Multi-pass membrane protein</topology>
    </subcellularLocation>
</comment>
<comment type="miscellaneous">
    <text evidence="1">Heme 1 (or BL or b562) is low-potential and absorbs at about 562 nm, and heme 2 (or BH or b566) is high-potential and absorbs at about 566 nm.</text>
</comment>
<comment type="similarity">
    <text evidence="3 4">Belongs to the cytochrome b family.</text>
</comment>
<comment type="caution">
    <text evidence="2">The full-length protein contains only eight transmembrane helices, not nine as predicted by bioinformatics tools.</text>
</comment>
<name>CYB_PUSHI</name>
<reference key="1">
    <citation type="journal article" date="1995" name="J. Mol. Evol.">
        <title>A molecular view of pinniped relationships with particular emphasis on the true seals.</title>
        <authorList>
            <person name="Arnason U."/>
            <person name="Bodin K."/>
            <person name="Gullberg A."/>
            <person name="Ledje C."/>
            <person name="Mouchaty S."/>
        </authorList>
    </citation>
    <scope>NUCLEOTIDE SEQUENCE [GENOMIC DNA]</scope>
</reference>
<reference key="2">
    <citation type="journal article" date="2006" name="Mol. Phylogenet. Evol.">
        <title>Pinniped phylogeny and a new hypothesis for their origin and dispersal.</title>
        <authorList>
            <person name="Arnason U."/>
            <person name="Gullberg A."/>
            <person name="Janke A."/>
            <person name="Kullberg M."/>
            <person name="Lehman N."/>
            <person name="Petrov E.A."/>
            <person name="Vainola R."/>
        </authorList>
    </citation>
    <scope>NUCLEOTIDE SEQUENCE [GENOMIC DNA]</scope>
</reference>
<reference key="3">
    <citation type="journal article" date="1995" name="J. Mammal.">
        <title>A phylogenetic perspective on the evolution of reproductive behavior in pagophilic seals of the Northwest Atlantic as indicated by mitochondrial DNA sequences.</title>
        <authorList>
            <person name="Perry E.A."/>
            <person name="Carr S.M."/>
            <person name="Bartlett S.E."/>
            <person name="Davidson W.S."/>
        </authorList>
    </citation>
    <scope>NUCLEOTIDE SEQUENCE [GENOMIC DNA] OF 1-134</scope>
    <source>
        <tissue>Muscle</tissue>
    </source>
</reference>
<organism>
    <name type="scientific">Pusa hispida</name>
    <name type="common">Ringed seal</name>
    <name type="synonym">Phoca hispida</name>
    <dbReference type="NCBI Taxonomy" id="9718"/>
    <lineage>
        <taxon>Eukaryota</taxon>
        <taxon>Metazoa</taxon>
        <taxon>Chordata</taxon>
        <taxon>Craniata</taxon>
        <taxon>Vertebrata</taxon>
        <taxon>Euteleostomi</taxon>
        <taxon>Mammalia</taxon>
        <taxon>Eutheria</taxon>
        <taxon>Laurasiatheria</taxon>
        <taxon>Carnivora</taxon>
        <taxon>Caniformia</taxon>
        <taxon>Pinnipedia</taxon>
        <taxon>Phocidae</taxon>
        <taxon>Phocinae</taxon>
        <taxon>Pusa</taxon>
    </lineage>
</organism>
<geneLocation type="mitochondrion"/>
<sequence length="379" mass="42658">MTNIRKTHPLMKIINNSFIDLPTPSNISAWWNFGSLLGICLILQILTGLFLAMHYTSDTTTAFSSVTHICRDVNYGWIIRYLHANGASMFFICLYMHVGRGLYYGSYTFTETWNIGIILLFTVMATAFMGYVLPWGQMSFWGATVITNLLSAIPYVGTDLVQWIWGGFSVDKATLTRFFAFHFILPFVVLALAVVHLLFLHETGSNNPSGITSDSDKIPFHPYYTIKDILGALLLILVLTLLVLFSPDLLGDPDNYIPANPLSTPPHIKPEWYFLFAYAILRSIPNKLGGVLALVLSILILAIMPLLHTSKQRGMMFRPISQCLFWLLVADLLTLTWIGGQPVEHPYITIGQLASILYFMILLVLMPIASIIENNILKW</sequence>
<dbReference type="EMBL" id="X82304">
    <property type="protein sequence ID" value="CAA57747.1"/>
    <property type="molecule type" value="Genomic_DNA"/>
</dbReference>
<dbReference type="EMBL" id="AM181036">
    <property type="protein sequence ID" value="CAJ57143.1"/>
    <property type="molecule type" value="Genomic_DNA"/>
</dbReference>
<dbReference type="EMBL" id="L39205">
    <property type="protein sequence ID" value="AAC28748.1"/>
    <property type="molecule type" value="Genomic_DNA"/>
</dbReference>
<dbReference type="PIR" id="S58449">
    <property type="entry name" value="S58449"/>
</dbReference>
<dbReference type="RefSeq" id="YP_778928.1">
    <property type="nucleotide sequence ID" value="NC_008433.1"/>
</dbReference>
<dbReference type="SMR" id="Q35468"/>
<dbReference type="GeneID" id="4355907"/>
<dbReference type="CTD" id="4519"/>
<dbReference type="GO" id="GO:0005743">
    <property type="term" value="C:mitochondrial inner membrane"/>
    <property type="evidence" value="ECO:0007669"/>
    <property type="project" value="UniProtKB-SubCell"/>
</dbReference>
<dbReference type="GO" id="GO:0045275">
    <property type="term" value="C:respiratory chain complex III"/>
    <property type="evidence" value="ECO:0007669"/>
    <property type="project" value="InterPro"/>
</dbReference>
<dbReference type="GO" id="GO:0046872">
    <property type="term" value="F:metal ion binding"/>
    <property type="evidence" value="ECO:0007669"/>
    <property type="project" value="UniProtKB-KW"/>
</dbReference>
<dbReference type="GO" id="GO:0008121">
    <property type="term" value="F:ubiquinol-cytochrome-c reductase activity"/>
    <property type="evidence" value="ECO:0007669"/>
    <property type="project" value="InterPro"/>
</dbReference>
<dbReference type="GO" id="GO:0006122">
    <property type="term" value="P:mitochondrial electron transport, ubiquinol to cytochrome c"/>
    <property type="evidence" value="ECO:0007669"/>
    <property type="project" value="TreeGrafter"/>
</dbReference>
<dbReference type="CDD" id="cd00290">
    <property type="entry name" value="cytochrome_b_C"/>
    <property type="match status" value="1"/>
</dbReference>
<dbReference type="CDD" id="cd00284">
    <property type="entry name" value="Cytochrome_b_N"/>
    <property type="match status" value="1"/>
</dbReference>
<dbReference type="FunFam" id="1.20.810.10:FF:000002">
    <property type="entry name" value="Cytochrome b"/>
    <property type="match status" value="1"/>
</dbReference>
<dbReference type="Gene3D" id="1.20.810.10">
    <property type="entry name" value="Cytochrome Bc1 Complex, Chain C"/>
    <property type="match status" value="1"/>
</dbReference>
<dbReference type="InterPro" id="IPR005798">
    <property type="entry name" value="Cyt_b/b6_C"/>
</dbReference>
<dbReference type="InterPro" id="IPR036150">
    <property type="entry name" value="Cyt_b/b6_C_sf"/>
</dbReference>
<dbReference type="InterPro" id="IPR005797">
    <property type="entry name" value="Cyt_b/b6_N"/>
</dbReference>
<dbReference type="InterPro" id="IPR027387">
    <property type="entry name" value="Cytb/b6-like_sf"/>
</dbReference>
<dbReference type="InterPro" id="IPR030689">
    <property type="entry name" value="Cytochrome_b"/>
</dbReference>
<dbReference type="InterPro" id="IPR048260">
    <property type="entry name" value="Cytochrome_b_C_euk/bac"/>
</dbReference>
<dbReference type="InterPro" id="IPR048259">
    <property type="entry name" value="Cytochrome_b_N_euk/bac"/>
</dbReference>
<dbReference type="InterPro" id="IPR016174">
    <property type="entry name" value="Di-haem_cyt_TM"/>
</dbReference>
<dbReference type="PANTHER" id="PTHR19271">
    <property type="entry name" value="CYTOCHROME B"/>
    <property type="match status" value="1"/>
</dbReference>
<dbReference type="PANTHER" id="PTHR19271:SF16">
    <property type="entry name" value="CYTOCHROME B"/>
    <property type="match status" value="1"/>
</dbReference>
<dbReference type="Pfam" id="PF00032">
    <property type="entry name" value="Cytochrom_B_C"/>
    <property type="match status" value="1"/>
</dbReference>
<dbReference type="Pfam" id="PF00033">
    <property type="entry name" value="Cytochrome_B"/>
    <property type="match status" value="1"/>
</dbReference>
<dbReference type="PIRSF" id="PIRSF038885">
    <property type="entry name" value="COB"/>
    <property type="match status" value="1"/>
</dbReference>
<dbReference type="SUPFAM" id="SSF81648">
    <property type="entry name" value="a domain/subunit of cytochrome bc1 complex (Ubiquinol-cytochrome c reductase)"/>
    <property type="match status" value="1"/>
</dbReference>
<dbReference type="SUPFAM" id="SSF81342">
    <property type="entry name" value="Transmembrane di-heme cytochromes"/>
    <property type="match status" value="1"/>
</dbReference>
<dbReference type="PROSITE" id="PS51003">
    <property type="entry name" value="CYTB_CTER"/>
    <property type="match status" value="1"/>
</dbReference>
<dbReference type="PROSITE" id="PS51002">
    <property type="entry name" value="CYTB_NTER"/>
    <property type="match status" value="1"/>
</dbReference>
<protein>
    <recommendedName>
        <fullName>Cytochrome b</fullName>
    </recommendedName>
    <alternativeName>
        <fullName>Complex III subunit 3</fullName>
    </alternativeName>
    <alternativeName>
        <fullName>Complex III subunit III</fullName>
    </alternativeName>
    <alternativeName>
        <fullName>Cytochrome b-c1 complex subunit 3</fullName>
    </alternativeName>
    <alternativeName>
        <fullName>Ubiquinol-cytochrome-c reductase complex cytochrome b subunit</fullName>
    </alternativeName>
</protein>
<feature type="chain" id="PRO_0000061389" description="Cytochrome b">
    <location>
        <begin position="1"/>
        <end position="379"/>
    </location>
</feature>
<feature type="transmembrane region" description="Helical" evidence="2">
    <location>
        <begin position="33"/>
        <end position="53"/>
    </location>
</feature>
<feature type="transmembrane region" description="Helical" evidence="2">
    <location>
        <begin position="77"/>
        <end position="98"/>
    </location>
</feature>
<feature type="transmembrane region" description="Helical" evidence="2">
    <location>
        <begin position="113"/>
        <end position="133"/>
    </location>
</feature>
<feature type="transmembrane region" description="Helical" evidence="2">
    <location>
        <begin position="178"/>
        <end position="198"/>
    </location>
</feature>
<feature type="transmembrane region" description="Helical" evidence="2">
    <location>
        <begin position="226"/>
        <end position="246"/>
    </location>
</feature>
<feature type="transmembrane region" description="Helical" evidence="2">
    <location>
        <begin position="288"/>
        <end position="308"/>
    </location>
</feature>
<feature type="transmembrane region" description="Helical" evidence="2">
    <location>
        <begin position="320"/>
        <end position="340"/>
    </location>
</feature>
<feature type="transmembrane region" description="Helical" evidence="2">
    <location>
        <begin position="347"/>
        <end position="367"/>
    </location>
</feature>
<feature type="binding site" description="axial binding residue" evidence="2">
    <location>
        <position position="83"/>
    </location>
    <ligand>
        <name>heme b</name>
        <dbReference type="ChEBI" id="CHEBI:60344"/>
        <label>b562</label>
    </ligand>
    <ligandPart>
        <name>Fe</name>
        <dbReference type="ChEBI" id="CHEBI:18248"/>
    </ligandPart>
</feature>
<feature type="binding site" description="axial binding residue" evidence="2">
    <location>
        <position position="97"/>
    </location>
    <ligand>
        <name>heme b</name>
        <dbReference type="ChEBI" id="CHEBI:60344"/>
        <label>b566</label>
    </ligand>
    <ligandPart>
        <name>Fe</name>
        <dbReference type="ChEBI" id="CHEBI:18248"/>
    </ligandPart>
</feature>
<feature type="binding site" description="axial binding residue" evidence="2">
    <location>
        <position position="182"/>
    </location>
    <ligand>
        <name>heme b</name>
        <dbReference type="ChEBI" id="CHEBI:60344"/>
        <label>b562</label>
    </ligand>
    <ligandPart>
        <name>Fe</name>
        <dbReference type="ChEBI" id="CHEBI:18248"/>
    </ligandPart>
</feature>
<feature type="binding site" description="axial binding residue" evidence="2">
    <location>
        <position position="196"/>
    </location>
    <ligand>
        <name>heme b</name>
        <dbReference type="ChEBI" id="CHEBI:60344"/>
        <label>b566</label>
    </ligand>
    <ligandPart>
        <name>Fe</name>
        <dbReference type="ChEBI" id="CHEBI:18248"/>
    </ligandPart>
</feature>
<feature type="binding site" evidence="2">
    <location>
        <position position="201"/>
    </location>
    <ligand>
        <name>a ubiquinone</name>
        <dbReference type="ChEBI" id="CHEBI:16389"/>
    </ligand>
</feature>
<evidence type="ECO:0000250" key="1"/>
<evidence type="ECO:0000250" key="2">
    <source>
        <dbReference type="UniProtKB" id="P00157"/>
    </source>
</evidence>
<evidence type="ECO:0000255" key="3">
    <source>
        <dbReference type="PROSITE-ProRule" id="PRU00967"/>
    </source>
</evidence>
<evidence type="ECO:0000255" key="4">
    <source>
        <dbReference type="PROSITE-ProRule" id="PRU00968"/>
    </source>
</evidence>
<keyword id="KW-0249">Electron transport</keyword>
<keyword id="KW-0349">Heme</keyword>
<keyword id="KW-0408">Iron</keyword>
<keyword id="KW-0472">Membrane</keyword>
<keyword id="KW-0479">Metal-binding</keyword>
<keyword id="KW-0496">Mitochondrion</keyword>
<keyword id="KW-0999">Mitochondrion inner membrane</keyword>
<keyword id="KW-0679">Respiratory chain</keyword>
<keyword id="KW-0812">Transmembrane</keyword>
<keyword id="KW-1133">Transmembrane helix</keyword>
<keyword id="KW-0813">Transport</keyword>
<keyword id="KW-0830">Ubiquinone</keyword>
<gene>
    <name type="primary">MT-CYB</name>
    <name type="synonym">COB</name>
    <name type="synonym">CYTB</name>
    <name type="synonym">MTCYB</name>
</gene>
<accession>Q35468</accession>
<accession>Q08GV5</accession>
<accession>Q35466</accession>
<proteinExistence type="inferred from homology"/>